<sequence length="673" mass="76135">MSKPFKLNSAFKPSGDQPDAIRRLEEGLEDGLAHQTLLGVTGSGKTFTIANVIADLQRPTMVLAPNKTLAAQLYGEMKEFFPENAVEYFVSYYDYYQPEAYVPSSDTFIEKDASVNEHIEQMRLSATKALLERRDVVVVASVSAIYGLGDPDLYLKMMLHLTVGMLIDQRAILRRLAELQYTRNDQAFQRGTFRVRGEVIDIFPAESDDIALRVELFDEEVERLSLFDPLTGQVESTVPRYTIYPKTHYVTPRERILQAMEEIKDELADRRKVLLANNKLLEEQRLSQRTQFDLEMMNELGYCSGIENYSRFLSGRGPGEPPPTLFDYLPADGLLVVDESHVTIPQIGGMYRGDRARKETLVEYGFRLPSALDNRPLKFEEFEALAPQTIYVSATPGNYELEKSGDEVVDQVVRPTGLLDPIIEVRPVATQVDDLLSEIRQRAAINERVLVTTLTKRMAEDLTEYLEEHGERVRYLHSDIDTVERMEIIRDLRLGEFDVLVGINLLREGLDMPEVSLVAILDADKEGFLRSERSLIQTIGRAARNVNGKAILYGDKITPSMAKAIGETERRREKQQKYNEEHGITPQGLNKKVVDILALGQNIAKTKAKGKGKGRSTAKAGIVELDMTPKALQQKIHELEGQMMQHAQNLEFEEAAQIRDQLHQLRELFIAAS</sequence>
<evidence type="ECO:0000255" key="1">
    <source>
        <dbReference type="HAMAP-Rule" id="MF_00204"/>
    </source>
</evidence>
<name>UVRB_SALDC</name>
<proteinExistence type="inferred from homology"/>
<accession>B5FP65</accession>
<protein>
    <recommendedName>
        <fullName evidence="1">UvrABC system protein B</fullName>
        <shortName evidence="1">Protein UvrB</shortName>
    </recommendedName>
    <alternativeName>
        <fullName evidence="1">Excinuclease ABC subunit B</fullName>
    </alternativeName>
</protein>
<dbReference type="EMBL" id="CP001144">
    <property type="protein sequence ID" value="ACH74274.1"/>
    <property type="molecule type" value="Genomic_DNA"/>
</dbReference>
<dbReference type="RefSeq" id="WP_000042502.1">
    <property type="nucleotide sequence ID" value="NC_011205.1"/>
</dbReference>
<dbReference type="SMR" id="B5FP65"/>
<dbReference type="KEGG" id="sed:SeD_A0893"/>
<dbReference type="HOGENOM" id="CLU_009621_2_1_6"/>
<dbReference type="Proteomes" id="UP000008322">
    <property type="component" value="Chromosome"/>
</dbReference>
<dbReference type="GO" id="GO:0005737">
    <property type="term" value="C:cytoplasm"/>
    <property type="evidence" value="ECO:0007669"/>
    <property type="project" value="UniProtKB-SubCell"/>
</dbReference>
<dbReference type="GO" id="GO:0009380">
    <property type="term" value="C:excinuclease repair complex"/>
    <property type="evidence" value="ECO:0007669"/>
    <property type="project" value="InterPro"/>
</dbReference>
<dbReference type="GO" id="GO:0005524">
    <property type="term" value="F:ATP binding"/>
    <property type="evidence" value="ECO:0007669"/>
    <property type="project" value="UniProtKB-UniRule"/>
</dbReference>
<dbReference type="GO" id="GO:0016887">
    <property type="term" value="F:ATP hydrolysis activity"/>
    <property type="evidence" value="ECO:0007669"/>
    <property type="project" value="InterPro"/>
</dbReference>
<dbReference type="GO" id="GO:0003677">
    <property type="term" value="F:DNA binding"/>
    <property type="evidence" value="ECO:0007669"/>
    <property type="project" value="UniProtKB-UniRule"/>
</dbReference>
<dbReference type="GO" id="GO:0009381">
    <property type="term" value="F:excinuclease ABC activity"/>
    <property type="evidence" value="ECO:0007669"/>
    <property type="project" value="UniProtKB-UniRule"/>
</dbReference>
<dbReference type="GO" id="GO:0004386">
    <property type="term" value="F:helicase activity"/>
    <property type="evidence" value="ECO:0007669"/>
    <property type="project" value="UniProtKB-KW"/>
</dbReference>
<dbReference type="GO" id="GO:0006289">
    <property type="term" value="P:nucleotide-excision repair"/>
    <property type="evidence" value="ECO:0007669"/>
    <property type="project" value="UniProtKB-UniRule"/>
</dbReference>
<dbReference type="GO" id="GO:0009432">
    <property type="term" value="P:SOS response"/>
    <property type="evidence" value="ECO:0007669"/>
    <property type="project" value="UniProtKB-UniRule"/>
</dbReference>
<dbReference type="CDD" id="cd17916">
    <property type="entry name" value="DEXHc_UvrB"/>
    <property type="match status" value="1"/>
</dbReference>
<dbReference type="CDD" id="cd18790">
    <property type="entry name" value="SF2_C_UvrB"/>
    <property type="match status" value="1"/>
</dbReference>
<dbReference type="FunFam" id="3.40.50.300:FF:000257">
    <property type="entry name" value="UvrABC system protein B"/>
    <property type="match status" value="1"/>
</dbReference>
<dbReference type="FunFam" id="3.40.50.300:FF:000401">
    <property type="entry name" value="UvrABC system protein B"/>
    <property type="match status" value="1"/>
</dbReference>
<dbReference type="FunFam" id="3.40.50.300:FF:000477">
    <property type="entry name" value="UvrABC system protein B"/>
    <property type="match status" value="1"/>
</dbReference>
<dbReference type="Gene3D" id="6.10.140.240">
    <property type="match status" value="1"/>
</dbReference>
<dbReference type="Gene3D" id="3.40.50.300">
    <property type="entry name" value="P-loop containing nucleotide triphosphate hydrolases"/>
    <property type="match status" value="3"/>
</dbReference>
<dbReference type="Gene3D" id="4.10.860.10">
    <property type="entry name" value="UVR domain"/>
    <property type="match status" value="1"/>
</dbReference>
<dbReference type="HAMAP" id="MF_00204">
    <property type="entry name" value="UvrB"/>
    <property type="match status" value="1"/>
</dbReference>
<dbReference type="InterPro" id="IPR006935">
    <property type="entry name" value="Helicase/UvrB_N"/>
</dbReference>
<dbReference type="InterPro" id="IPR014001">
    <property type="entry name" value="Helicase_ATP-bd"/>
</dbReference>
<dbReference type="InterPro" id="IPR001650">
    <property type="entry name" value="Helicase_C-like"/>
</dbReference>
<dbReference type="InterPro" id="IPR027417">
    <property type="entry name" value="P-loop_NTPase"/>
</dbReference>
<dbReference type="InterPro" id="IPR001943">
    <property type="entry name" value="UVR_dom"/>
</dbReference>
<dbReference type="InterPro" id="IPR036876">
    <property type="entry name" value="UVR_dom_sf"/>
</dbReference>
<dbReference type="InterPro" id="IPR004807">
    <property type="entry name" value="UvrB"/>
</dbReference>
<dbReference type="InterPro" id="IPR041471">
    <property type="entry name" value="UvrB_inter"/>
</dbReference>
<dbReference type="InterPro" id="IPR024759">
    <property type="entry name" value="UvrB_YAD/RRR_dom"/>
</dbReference>
<dbReference type="NCBIfam" id="NF003673">
    <property type="entry name" value="PRK05298.1"/>
    <property type="match status" value="1"/>
</dbReference>
<dbReference type="NCBIfam" id="TIGR00631">
    <property type="entry name" value="uvrb"/>
    <property type="match status" value="1"/>
</dbReference>
<dbReference type="PANTHER" id="PTHR24029">
    <property type="entry name" value="UVRABC SYSTEM PROTEIN B"/>
    <property type="match status" value="1"/>
</dbReference>
<dbReference type="PANTHER" id="PTHR24029:SF0">
    <property type="entry name" value="UVRABC SYSTEM PROTEIN B"/>
    <property type="match status" value="1"/>
</dbReference>
<dbReference type="Pfam" id="PF00271">
    <property type="entry name" value="Helicase_C"/>
    <property type="match status" value="1"/>
</dbReference>
<dbReference type="Pfam" id="PF04851">
    <property type="entry name" value="ResIII"/>
    <property type="match status" value="1"/>
</dbReference>
<dbReference type="Pfam" id="PF02151">
    <property type="entry name" value="UVR"/>
    <property type="match status" value="1"/>
</dbReference>
<dbReference type="Pfam" id="PF12344">
    <property type="entry name" value="UvrB"/>
    <property type="match status" value="1"/>
</dbReference>
<dbReference type="Pfam" id="PF17757">
    <property type="entry name" value="UvrB_inter"/>
    <property type="match status" value="1"/>
</dbReference>
<dbReference type="SMART" id="SM00487">
    <property type="entry name" value="DEXDc"/>
    <property type="match status" value="1"/>
</dbReference>
<dbReference type="SMART" id="SM00490">
    <property type="entry name" value="HELICc"/>
    <property type="match status" value="1"/>
</dbReference>
<dbReference type="SUPFAM" id="SSF46600">
    <property type="entry name" value="C-terminal UvrC-binding domain of UvrB"/>
    <property type="match status" value="1"/>
</dbReference>
<dbReference type="SUPFAM" id="SSF52540">
    <property type="entry name" value="P-loop containing nucleoside triphosphate hydrolases"/>
    <property type="match status" value="2"/>
</dbReference>
<dbReference type="PROSITE" id="PS51192">
    <property type="entry name" value="HELICASE_ATP_BIND_1"/>
    <property type="match status" value="1"/>
</dbReference>
<dbReference type="PROSITE" id="PS51194">
    <property type="entry name" value="HELICASE_CTER"/>
    <property type="match status" value="1"/>
</dbReference>
<dbReference type="PROSITE" id="PS50151">
    <property type="entry name" value="UVR"/>
    <property type="match status" value="1"/>
</dbReference>
<keyword id="KW-0067">ATP-binding</keyword>
<keyword id="KW-0963">Cytoplasm</keyword>
<keyword id="KW-0227">DNA damage</keyword>
<keyword id="KW-0228">DNA excision</keyword>
<keyword id="KW-0234">DNA repair</keyword>
<keyword id="KW-0267">Excision nuclease</keyword>
<keyword id="KW-0347">Helicase</keyword>
<keyword id="KW-0378">Hydrolase</keyword>
<keyword id="KW-0547">Nucleotide-binding</keyword>
<keyword id="KW-0742">SOS response</keyword>
<reference key="1">
    <citation type="journal article" date="2011" name="J. Bacteriol.">
        <title>Comparative genomics of 28 Salmonella enterica isolates: evidence for CRISPR-mediated adaptive sublineage evolution.</title>
        <authorList>
            <person name="Fricke W.F."/>
            <person name="Mammel M.K."/>
            <person name="McDermott P.F."/>
            <person name="Tartera C."/>
            <person name="White D.G."/>
            <person name="Leclerc J.E."/>
            <person name="Ravel J."/>
            <person name="Cebula T.A."/>
        </authorList>
    </citation>
    <scope>NUCLEOTIDE SEQUENCE [LARGE SCALE GENOMIC DNA]</scope>
    <source>
        <strain>CT_02021853</strain>
    </source>
</reference>
<gene>
    <name evidence="1" type="primary">uvrB</name>
    <name type="ordered locus">SeD_A0893</name>
</gene>
<comment type="function">
    <text evidence="1">The UvrABC repair system catalyzes the recognition and processing of DNA lesions. A damage recognition complex composed of 2 UvrA and 2 UvrB subunits scans DNA for abnormalities. Upon binding of the UvrA(2)B(2) complex to a putative damaged site, the DNA wraps around one UvrB monomer. DNA wrap is dependent on ATP binding by UvrB and probably causes local melting of the DNA helix, facilitating insertion of UvrB beta-hairpin between the DNA strands. Then UvrB probes one DNA strand for the presence of a lesion. If a lesion is found the UvrA subunits dissociate and the UvrB-DNA preincision complex is formed. This complex is subsequently bound by UvrC and the second UvrB is released. If no lesion is found, the DNA wraps around the other UvrB subunit that will check the other stand for damage.</text>
</comment>
<comment type="subunit">
    <text evidence="1">Forms a heterotetramer with UvrA during the search for lesions. Interacts with UvrC in an incision complex.</text>
</comment>
<comment type="subcellular location">
    <subcellularLocation>
        <location evidence="1">Cytoplasm</location>
    </subcellularLocation>
</comment>
<comment type="domain">
    <text evidence="1">The beta-hairpin motif is involved in DNA binding.</text>
</comment>
<comment type="similarity">
    <text evidence="1">Belongs to the UvrB family.</text>
</comment>
<feature type="chain" id="PRO_1000099561" description="UvrABC system protein B">
    <location>
        <begin position="1"/>
        <end position="673"/>
    </location>
</feature>
<feature type="domain" description="Helicase ATP-binding" evidence="1">
    <location>
        <begin position="26"/>
        <end position="183"/>
    </location>
</feature>
<feature type="domain" description="Helicase C-terminal" evidence="1">
    <location>
        <begin position="431"/>
        <end position="597"/>
    </location>
</feature>
<feature type="domain" description="UVR" evidence="1">
    <location>
        <begin position="633"/>
        <end position="668"/>
    </location>
</feature>
<feature type="short sequence motif" description="Beta-hairpin">
    <location>
        <begin position="92"/>
        <end position="115"/>
    </location>
</feature>
<feature type="binding site" evidence="1">
    <location>
        <begin position="39"/>
        <end position="46"/>
    </location>
    <ligand>
        <name>ATP</name>
        <dbReference type="ChEBI" id="CHEBI:30616"/>
    </ligand>
</feature>
<organism>
    <name type="scientific">Salmonella dublin (strain CT_02021853)</name>
    <dbReference type="NCBI Taxonomy" id="439851"/>
    <lineage>
        <taxon>Bacteria</taxon>
        <taxon>Pseudomonadati</taxon>
        <taxon>Pseudomonadota</taxon>
        <taxon>Gammaproteobacteria</taxon>
        <taxon>Enterobacterales</taxon>
        <taxon>Enterobacteriaceae</taxon>
        <taxon>Salmonella</taxon>
    </lineage>
</organism>